<accession>P0C6J7</accession>
<gene>
    <name type="primary">C</name>
</gene>
<feature type="chain" id="PRO_0000324344" description="Capsid protein">
    <location>
        <begin position="1"/>
        <end position="262"/>
    </location>
</feature>
<feature type="region of interest" description="Disordered" evidence="4">
    <location>
        <begin position="183"/>
        <end position="262"/>
    </location>
</feature>
<feature type="region of interest" description="RNA binding" evidence="1">
    <location>
        <begin position="254"/>
        <end position="260"/>
    </location>
</feature>
<feature type="short sequence motif" description="Bipartite nuclear localization signal" evidence="3">
    <location>
        <begin position="215"/>
        <end position="233"/>
    </location>
</feature>
<feature type="compositionally biased region" description="Basic residues" evidence="4">
    <location>
        <begin position="215"/>
        <end position="234"/>
    </location>
</feature>
<feature type="compositionally biased region" description="Basic residues" evidence="4">
    <location>
        <begin position="252"/>
        <end position="262"/>
    </location>
</feature>
<feature type="modified residue" description="Phosphoserine; by host" evidence="1">
    <location>
        <position position="232"/>
    </location>
</feature>
<feature type="modified residue" description="Phosphoserine; by host" evidence="1">
    <location>
        <position position="245"/>
    </location>
</feature>
<feature type="helix" evidence="6">
    <location>
        <begin position="3"/>
        <end position="9"/>
    </location>
</feature>
<feature type="helix" evidence="6">
    <location>
        <begin position="12"/>
        <end position="14"/>
    </location>
</feature>
<feature type="strand" evidence="6">
    <location>
        <begin position="17"/>
        <end position="20"/>
    </location>
</feature>
<feature type="helix" evidence="6">
    <location>
        <begin position="23"/>
        <end position="39"/>
    </location>
</feature>
<feature type="helix" evidence="6">
    <location>
        <begin position="45"/>
        <end position="77"/>
    </location>
</feature>
<feature type="helix" evidence="6">
    <location>
        <begin position="123"/>
        <end position="155"/>
    </location>
</feature>
<feature type="helix" evidence="6">
    <location>
        <begin position="158"/>
        <end position="173"/>
    </location>
</feature>
<reference key="1">
    <citation type="journal article" date="1984" name="J. Virol.">
        <title>Nucleotide sequence of a cloned duck hepatitis B virus genome: comparison with woodchuck and human hepatitis B virus sequences.</title>
        <authorList>
            <person name="Mandart E."/>
            <person name="Kay A."/>
            <person name="Galibert F."/>
        </authorList>
    </citation>
    <scope>NUCLEOTIDE SEQUENCE [GENOMIC DNA]</scope>
</reference>
<keyword id="KW-0002">3D-structure</keyword>
<keyword id="KW-0024">Alternative initiation</keyword>
<keyword id="KW-0167">Capsid protein</keyword>
<keyword id="KW-1176">Cytoplasmic inwards viral transport</keyword>
<keyword id="KW-0238">DNA-binding</keyword>
<keyword id="KW-1035">Host cytoplasm</keyword>
<keyword id="KW-0945">Host-virus interaction</keyword>
<keyword id="KW-1177">Microtubular inwards viral transport</keyword>
<keyword id="KW-0597">Phosphoprotein</keyword>
<keyword id="KW-0694">RNA-binding</keyword>
<keyword id="KW-1144">T=4 icosahedral capsid protein</keyword>
<keyword id="KW-1163">Viral penetration into host nucleus</keyword>
<keyword id="KW-0946">Virion</keyword>
<keyword id="KW-1160">Virus entry into host cell</keyword>
<evidence type="ECO:0000250" key="1"/>
<evidence type="ECO:0000250" key="2">
    <source>
        <dbReference type="UniProtKB" id="P03148"/>
    </source>
</evidence>
<evidence type="ECO:0000255" key="3"/>
<evidence type="ECO:0000256" key="4">
    <source>
        <dbReference type="SAM" id="MobiDB-lite"/>
    </source>
</evidence>
<evidence type="ECO:0000305" key="5"/>
<evidence type="ECO:0007829" key="6">
    <source>
        <dbReference type="PDB" id="6YGI"/>
    </source>
</evidence>
<organismHost>
    <name type="scientific">Anas</name>
    <name type="common">ducks</name>
    <dbReference type="NCBI Taxonomy" id="8835"/>
</organismHost>
<dbReference type="EMBL" id="K01834">
    <property type="status" value="NOT_ANNOTATED_CDS"/>
    <property type="molecule type" value="Genomic_DNA"/>
</dbReference>
<dbReference type="PDB" id="6YGH">
    <property type="method" value="EM"/>
    <property type="resolution" value="3.70 A"/>
    <property type="chains" value="A/B/C/D/E/H=1-262"/>
</dbReference>
<dbReference type="PDB" id="6YGI">
    <property type="method" value="EM"/>
    <property type="resolution" value="3.00 A"/>
    <property type="chains" value="A/B/C/D/E/H=1-77, A/B/C/D/E/H=123-262"/>
</dbReference>
<dbReference type="PDBsum" id="6YGH"/>
<dbReference type="PDBsum" id="6YGI"/>
<dbReference type="EMDB" id="EMD-10800"/>
<dbReference type="EMDB" id="EMD-10803"/>
<dbReference type="SMR" id="P0C6J7"/>
<dbReference type="Proteomes" id="UP000180685">
    <property type="component" value="Genome"/>
</dbReference>
<dbReference type="GO" id="GO:0043657">
    <property type="term" value="C:host cell"/>
    <property type="evidence" value="ECO:0007669"/>
    <property type="project" value="GOC"/>
</dbReference>
<dbReference type="GO" id="GO:0030430">
    <property type="term" value="C:host cell cytoplasm"/>
    <property type="evidence" value="ECO:0007669"/>
    <property type="project" value="UniProtKB-SubCell"/>
</dbReference>
<dbReference type="GO" id="GO:0039619">
    <property type="term" value="C:T=4 icosahedral viral capsid"/>
    <property type="evidence" value="ECO:0007669"/>
    <property type="project" value="UniProtKB-KW"/>
</dbReference>
<dbReference type="GO" id="GO:0003677">
    <property type="term" value="F:DNA binding"/>
    <property type="evidence" value="ECO:0007669"/>
    <property type="project" value="UniProtKB-KW"/>
</dbReference>
<dbReference type="GO" id="GO:0003723">
    <property type="term" value="F:RNA binding"/>
    <property type="evidence" value="ECO:0007669"/>
    <property type="project" value="UniProtKB-KW"/>
</dbReference>
<dbReference type="GO" id="GO:0005198">
    <property type="term" value="F:structural molecule activity"/>
    <property type="evidence" value="ECO:0007669"/>
    <property type="project" value="InterPro"/>
</dbReference>
<dbReference type="GO" id="GO:0075521">
    <property type="term" value="P:microtubule-dependent intracellular transport of viral material towards nucleus"/>
    <property type="evidence" value="ECO:0007669"/>
    <property type="project" value="UniProtKB-KW"/>
</dbReference>
<dbReference type="GO" id="GO:0046718">
    <property type="term" value="P:symbiont entry into host cell"/>
    <property type="evidence" value="ECO:0007669"/>
    <property type="project" value="UniProtKB-KW"/>
</dbReference>
<dbReference type="GO" id="GO:0075732">
    <property type="term" value="P:viral penetration into host nucleus"/>
    <property type="evidence" value="ECO:0007669"/>
    <property type="project" value="UniProtKB-KW"/>
</dbReference>
<dbReference type="Gene3D" id="1.10.4090.10">
    <property type="entry name" value="Viral capsid, core domain supefamily, Hepatitis B virus"/>
    <property type="match status" value="2"/>
</dbReference>
<dbReference type="InterPro" id="IPR002006">
    <property type="entry name" value="Hepatitis_core"/>
</dbReference>
<dbReference type="InterPro" id="IPR036459">
    <property type="entry name" value="Viral_capsid_core_dom_sf_HBV"/>
</dbReference>
<dbReference type="Pfam" id="PF00906">
    <property type="entry name" value="Hepatitis_core"/>
    <property type="match status" value="1"/>
</dbReference>
<dbReference type="SUPFAM" id="SSF47852">
    <property type="entry name" value="Hepatitis B viral capsid (hbcag)"/>
    <property type="match status" value="1"/>
</dbReference>
<protein>
    <recommendedName>
        <fullName>Capsid protein</fullName>
    </recommendedName>
    <alternativeName>
        <fullName>Core antigen</fullName>
    </alternativeName>
    <alternativeName>
        <fullName>Core protein</fullName>
    </alternativeName>
    <alternativeName>
        <fullName>HBcAg</fullName>
    </alternativeName>
</protein>
<comment type="function">
    <text evidence="1">Self assembles to form an icosahedral capsid. Most capsid appear to be large particles with an icosahedral symmetry of T=4 and consist of 240 copies of capsid protein, though a fraction forms smaller T=3 particles consisting of 180 capsid proteins. Entering capsid are transported along microtubules to the nucleus. Phosphorylation of the capsid is thought to induce exposure of nuclear localization signal in the C-terminal portion of the capsid protein that allows binding to the nuclear pore complex via the importin (karyopherin-) alpha and beta. Capsids are imported in intact form through the nuclear pore into the nuclear basket, where it probably binds NUP153. Only capsids that contain the mature viral genome can release the viral DNA and capsid protein into the nucleoplasm. Immature capsids get stucked in the basket. Capsids encapsulate the pre-genomic RNA and the P protein. Pre-genomic RNA is reverse transcribed into DNA while the capsid is still in the cytoplasm. The capsid can then either be directed to the nucleus, providing more genome for transcription, or bud through the endoplasmic reticulum to provide new virions (By similarity).</text>
</comment>
<comment type="subunit">
    <text evidence="1">Homodimerizes, then multimerizes.</text>
</comment>
<comment type="subcellular location">
    <molecule>Capsid protein</molecule>
    <subcellularLocation>
        <location evidence="2">Virion</location>
    </subcellularLocation>
    <subcellularLocation>
        <location evidence="2">Host cytoplasm</location>
    </subcellularLocation>
</comment>
<comment type="alternative products">
    <event type="alternative initiation"/>
    <isoform>
        <id>P0C6J7-1</id>
        <name>Capsid protein</name>
        <sequence type="displayed"/>
    </isoform>
    <isoform>
        <id>P03154-1</id>
        <name>External core antigen</name>
        <sequence type="external"/>
    </isoform>
</comment>
<comment type="similarity">
    <text evidence="5">Belongs to the avihepadnavirus core antigen family.</text>
</comment>
<name>CAPSD_DHBV1</name>
<proteinExistence type="evidence at protein level"/>
<organism>
    <name type="scientific">Duck hepatitis B virus (strain United States/DHBV-16)</name>
    <name type="common">DHBV</name>
    <dbReference type="NCBI Taxonomy" id="489543"/>
    <lineage>
        <taxon>Viruses</taxon>
        <taxon>Riboviria</taxon>
        <taxon>Pararnavirae</taxon>
        <taxon>Artverviricota</taxon>
        <taxon>Revtraviricetes</taxon>
        <taxon>Blubervirales</taxon>
        <taxon>Hepadnaviridae</taxon>
        <taxon>Avihepadnavirus</taxon>
        <taxon>Duck hepatitis B virus</taxon>
    </lineage>
</organism>
<sequence>MDINASRALANVYDLPDDFFPKIDDLVRDAKDALEPYWKSDSIKKHVLIATHFVDLIEDFWQTTQGMHEIAESLRAVIPPTTTPVPPGYLIQHEEAEEIPLGDLFKHQEERIVSFQPDYPITARIHAHLKAYAKINEESLDRARRLLWWHYNCLLWGEAQVTNYISRLRTWLSTPEKYRGRDAPTIEAITRPIQVAQGGRKTTTGTRKPRGLEPRRRKVKTTVVYGRRRSKSRERRAPTPQRAGSPLPRSSSSHHRSPSPRK</sequence>